<gene>
    <name type="primary">wzzB</name>
    <name type="synonym">cld</name>
    <name type="synonym">rol</name>
    <name type="ordered locus">SF2089</name>
    <name type="ordered locus">S2210</name>
</gene>
<dbReference type="EMBL" id="X71970">
    <property type="protein sequence ID" value="CAA50783.1"/>
    <property type="molecule type" value="Genomic_DNA"/>
</dbReference>
<dbReference type="EMBL" id="AE005674">
    <property type="protein sequence ID" value="AAN43629.1"/>
    <property type="status" value="ALT_INIT"/>
    <property type="molecule type" value="Genomic_DNA"/>
</dbReference>
<dbReference type="EMBL" id="AE014073">
    <property type="protein sequence ID" value="AAP17457.1"/>
    <property type="status" value="ALT_INIT"/>
    <property type="molecule type" value="Genomic_DNA"/>
</dbReference>
<dbReference type="RefSeq" id="NP_707922.1">
    <property type="nucleotide sequence ID" value="NC_004337.2"/>
</dbReference>
<dbReference type="RefSeq" id="WP_005049214.1">
    <property type="nucleotide sequence ID" value="NZ_WPGW01000112.1"/>
</dbReference>
<dbReference type="PDB" id="4E29">
    <property type="method" value="X-ray"/>
    <property type="resolution" value="1.60 A"/>
    <property type="chains" value="A/B=54-200"/>
</dbReference>
<dbReference type="PDB" id="4E2C">
    <property type="method" value="X-ray"/>
    <property type="resolution" value="2.80 A"/>
    <property type="chains" value="A/B=55-255"/>
</dbReference>
<dbReference type="PDB" id="4E2H">
    <property type="method" value="X-ray"/>
    <property type="resolution" value="2.36 A"/>
    <property type="chains" value="A/B/C=54-285"/>
</dbReference>
<dbReference type="PDB" id="4ZM1">
    <property type="method" value="X-ray"/>
    <property type="resolution" value="2.55 A"/>
    <property type="chains" value="A/B/C=54-291"/>
</dbReference>
<dbReference type="PDB" id="4ZM5">
    <property type="method" value="X-ray"/>
    <property type="resolution" value="2.47 A"/>
    <property type="chains" value="A/B/C=54-293"/>
</dbReference>
<dbReference type="PDBsum" id="4E29"/>
<dbReference type="PDBsum" id="4E2C"/>
<dbReference type="PDBsum" id="4E2H"/>
<dbReference type="PDBsum" id="4ZM1"/>
<dbReference type="PDBsum" id="4ZM5"/>
<dbReference type="SMR" id="P37792"/>
<dbReference type="STRING" id="198214.SF2089"/>
<dbReference type="PaxDb" id="198214-SF2089"/>
<dbReference type="GeneID" id="1025284"/>
<dbReference type="KEGG" id="sfl:SF2089"/>
<dbReference type="KEGG" id="sfx:S2210"/>
<dbReference type="PATRIC" id="fig|198214.7.peg.2498"/>
<dbReference type="HOGENOM" id="CLU_060925_1_1_6"/>
<dbReference type="UniPathway" id="UPA00030"/>
<dbReference type="EvolutionaryTrace" id="P37792"/>
<dbReference type="Proteomes" id="UP000001006">
    <property type="component" value="Chromosome"/>
</dbReference>
<dbReference type="Proteomes" id="UP000002673">
    <property type="component" value="Chromosome"/>
</dbReference>
<dbReference type="GO" id="GO:0005886">
    <property type="term" value="C:plasma membrane"/>
    <property type="evidence" value="ECO:0007669"/>
    <property type="project" value="UniProtKB-SubCell"/>
</dbReference>
<dbReference type="GO" id="GO:0004713">
    <property type="term" value="F:protein tyrosine kinase activity"/>
    <property type="evidence" value="ECO:0007669"/>
    <property type="project" value="TreeGrafter"/>
</dbReference>
<dbReference type="GO" id="GO:0009103">
    <property type="term" value="P:lipopolysaccharide biosynthetic process"/>
    <property type="evidence" value="ECO:0007669"/>
    <property type="project" value="UniProtKB-UniPathway"/>
</dbReference>
<dbReference type="FunFam" id="3.30.1890.10:FF:000002">
    <property type="entry name" value="O-antigen chain length determinant protein"/>
    <property type="match status" value="1"/>
</dbReference>
<dbReference type="Gene3D" id="3.30.1890.10">
    <property type="entry name" value="FepE-like"/>
    <property type="match status" value="1"/>
</dbReference>
<dbReference type="InterPro" id="IPR050445">
    <property type="entry name" value="Bact_polysacc_biosynth/exp"/>
</dbReference>
<dbReference type="InterPro" id="IPR003856">
    <property type="entry name" value="LPS_length_determ_N_term"/>
</dbReference>
<dbReference type="NCBIfam" id="NF012015">
    <property type="entry name" value="PRK15471.1"/>
    <property type="match status" value="1"/>
</dbReference>
<dbReference type="PANTHER" id="PTHR32309:SF29">
    <property type="entry name" value="CHAIN LENGTH DETERMINANT PROTEIN"/>
    <property type="match status" value="1"/>
</dbReference>
<dbReference type="PANTHER" id="PTHR32309">
    <property type="entry name" value="TYROSINE-PROTEIN KINASE"/>
    <property type="match status" value="1"/>
</dbReference>
<dbReference type="Pfam" id="PF02706">
    <property type="entry name" value="Wzz"/>
    <property type="match status" value="1"/>
</dbReference>
<dbReference type="SUPFAM" id="SSF160355">
    <property type="entry name" value="Bacterial polysaccharide co-polymerase-like"/>
    <property type="match status" value="1"/>
</dbReference>
<protein>
    <recommendedName>
        <fullName>Chain length determinant protein</fullName>
    </recommendedName>
    <alternativeName>
        <fullName>Polysaccharide antigen chain regulator</fullName>
    </alternativeName>
</protein>
<reference key="1">
    <citation type="journal article" date="1994" name="J. Bacteriol.">
        <title>Characterization of the rfc region of Shigella flexneri.</title>
        <authorList>
            <person name="Morona R."/>
            <person name="Mavris M."/>
            <person name="Fallarino A."/>
            <person name="Manning P.A."/>
        </authorList>
    </citation>
    <scope>NUCLEOTIDE SEQUENCE [GENOMIC DNA]</scope>
    <source>
        <strain>PE577 / Serotype 2a</strain>
    </source>
</reference>
<reference key="2">
    <citation type="journal article" date="2002" name="Nucleic Acids Res.">
        <title>Genome sequence of Shigella flexneri 2a: insights into pathogenicity through comparison with genomes of Escherichia coli K12 and O157.</title>
        <authorList>
            <person name="Jin Q."/>
            <person name="Yuan Z."/>
            <person name="Xu J."/>
            <person name="Wang Y."/>
            <person name="Shen Y."/>
            <person name="Lu W."/>
            <person name="Wang J."/>
            <person name="Liu H."/>
            <person name="Yang J."/>
            <person name="Yang F."/>
            <person name="Zhang X."/>
            <person name="Zhang J."/>
            <person name="Yang G."/>
            <person name="Wu H."/>
            <person name="Qu D."/>
            <person name="Dong J."/>
            <person name="Sun L."/>
            <person name="Xue Y."/>
            <person name="Zhao A."/>
            <person name="Gao Y."/>
            <person name="Zhu J."/>
            <person name="Kan B."/>
            <person name="Ding K."/>
            <person name="Chen S."/>
            <person name="Cheng H."/>
            <person name="Yao Z."/>
            <person name="He B."/>
            <person name="Chen R."/>
            <person name="Ma D."/>
            <person name="Qiang B."/>
            <person name="Wen Y."/>
            <person name="Hou Y."/>
            <person name="Yu J."/>
        </authorList>
    </citation>
    <scope>NUCLEOTIDE SEQUENCE [LARGE SCALE GENOMIC DNA]</scope>
    <source>
        <strain>301 / Serotype 2a</strain>
    </source>
</reference>
<reference key="3">
    <citation type="journal article" date="2003" name="Infect. Immun.">
        <title>Complete genome sequence and comparative genomics of Shigella flexneri serotype 2a strain 2457T.</title>
        <authorList>
            <person name="Wei J."/>
            <person name="Goldberg M.B."/>
            <person name="Burland V."/>
            <person name="Venkatesan M.M."/>
            <person name="Deng W."/>
            <person name="Fournier G."/>
            <person name="Mayhew G.F."/>
            <person name="Plunkett G. III"/>
            <person name="Rose D.J."/>
            <person name="Darling A."/>
            <person name="Mau B."/>
            <person name="Perna N.T."/>
            <person name="Payne S.M."/>
            <person name="Runyen-Janecky L.J."/>
            <person name="Zhou S."/>
            <person name="Schwartz D.C."/>
            <person name="Blattner F.R."/>
        </authorList>
    </citation>
    <scope>NUCLEOTIDE SEQUENCE [LARGE SCALE GENOMIC DNA]</scope>
    <source>
        <strain>ATCC 700930 / 2457T / Serotype 2a</strain>
    </source>
</reference>
<sequence>MRVENNNVSGQNHDPEQIDLIDLLVQLWRGKMTIIISVIVAIALAIGYLAVAKEKWTSTAIITQPDVGQIAGYNNAMNVIYGQAAPKVSDLQETLIGRFSSAFSALAETLDNQEEPEKLTIEPSVKNQQLPLTVSYVGQTAEGAQMKLAQYIQQVDDKVNQELEKDLKDNIALGRKNLQDSLRTQEVVAQEQKDLRIRQIQEALQYANQAQVTKPQVQQTEDVTQDTLFLLGSEALESMIKHEATRPLVFSPNYYQTRQNLLDIEKLKFDDLDIHAYRYVMKPTLPIRRDSPKKAITLILAVLLGGMVGAGIVLGRNALRNYNAK</sequence>
<keyword id="KW-0002">3D-structure</keyword>
<keyword id="KW-0997">Cell inner membrane</keyword>
<keyword id="KW-1003">Cell membrane</keyword>
<keyword id="KW-0448">Lipopolysaccharide biosynthesis</keyword>
<keyword id="KW-0472">Membrane</keyword>
<keyword id="KW-1185">Reference proteome</keyword>
<keyword id="KW-0812">Transmembrane</keyword>
<keyword id="KW-1133">Transmembrane helix</keyword>
<evidence type="ECO:0000255" key="1"/>
<evidence type="ECO:0000305" key="2"/>
<evidence type="ECO:0007829" key="3">
    <source>
        <dbReference type="PDB" id="4E29"/>
    </source>
</evidence>
<evidence type="ECO:0007829" key="4">
    <source>
        <dbReference type="PDB" id="4E2H"/>
    </source>
</evidence>
<evidence type="ECO:0007829" key="5">
    <source>
        <dbReference type="PDB" id="4ZM5"/>
    </source>
</evidence>
<proteinExistence type="evidence at protein level"/>
<organism>
    <name type="scientific">Shigella flexneri</name>
    <dbReference type="NCBI Taxonomy" id="623"/>
    <lineage>
        <taxon>Bacteria</taxon>
        <taxon>Pseudomonadati</taxon>
        <taxon>Pseudomonadota</taxon>
        <taxon>Gammaproteobacteria</taxon>
        <taxon>Enterobacterales</taxon>
        <taxon>Enterobacteriaceae</taxon>
        <taxon>Shigella</taxon>
    </lineage>
</organism>
<accession>P37792</accession>
<feature type="chain" id="PRO_0000065995" description="Chain length determinant protein">
    <location>
        <begin position="1"/>
        <end position="325"/>
    </location>
</feature>
<feature type="topological domain" description="Cytoplasmic" evidence="1">
    <location>
        <begin position="1"/>
        <end position="31"/>
    </location>
</feature>
<feature type="transmembrane region" description="Helical" evidence="1">
    <location>
        <begin position="32"/>
        <end position="52"/>
    </location>
</feature>
<feature type="topological domain" description="Periplasmic" evidence="1">
    <location>
        <begin position="53"/>
        <end position="294"/>
    </location>
</feature>
<feature type="transmembrane region" description="Helical" evidence="1">
    <location>
        <begin position="295"/>
        <end position="315"/>
    </location>
</feature>
<feature type="topological domain" description="Cytoplasmic" evidence="1">
    <location>
        <begin position="316"/>
        <end position="325"/>
    </location>
</feature>
<feature type="strand" evidence="4">
    <location>
        <begin position="58"/>
        <end position="63"/>
    </location>
</feature>
<feature type="helix" evidence="3">
    <location>
        <begin position="68"/>
        <end position="70"/>
    </location>
</feature>
<feature type="helix" evidence="3">
    <location>
        <begin position="71"/>
        <end position="81"/>
    </location>
</feature>
<feature type="helix" evidence="3">
    <location>
        <begin position="82"/>
        <end position="84"/>
    </location>
</feature>
<feature type="helix" evidence="3">
    <location>
        <begin position="88"/>
        <end position="111"/>
    </location>
</feature>
<feature type="strand" evidence="3">
    <location>
        <begin position="112"/>
        <end position="115"/>
    </location>
</feature>
<feature type="strand" evidence="3">
    <location>
        <begin position="118"/>
        <end position="123"/>
    </location>
</feature>
<feature type="strand" evidence="3">
    <location>
        <begin position="132"/>
        <end position="140"/>
    </location>
</feature>
<feature type="helix" evidence="3">
    <location>
        <begin position="141"/>
        <end position="200"/>
    </location>
</feature>
<feature type="turn" evidence="4">
    <location>
        <begin position="209"/>
        <end position="211"/>
    </location>
</feature>
<feature type="helix" evidence="4">
    <location>
        <begin position="220"/>
        <end position="222"/>
    </location>
</feature>
<feature type="turn" evidence="5">
    <location>
        <begin position="225"/>
        <end position="227"/>
    </location>
</feature>
<feature type="helix" evidence="4">
    <location>
        <begin position="228"/>
        <end position="231"/>
    </location>
</feature>
<feature type="helix" evidence="4">
    <location>
        <begin position="233"/>
        <end position="241"/>
    </location>
</feature>
<feature type="helix" evidence="4">
    <location>
        <begin position="243"/>
        <end position="245"/>
    </location>
</feature>
<feature type="helix" evidence="4">
    <location>
        <begin position="252"/>
        <end position="264"/>
    </location>
</feature>
<feature type="turn" evidence="5">
    <location>
        <begin position="269"/>
        <end position="271"/>
    </location>
</feature>
<feature type="strand" evidence="4">
    <location>
        <begin position="277"/>
        <end position="281"/>
    </location>
</feature>
<name>WZZB_SHIFL</name>
<comment type="function">
    <text>Confers a modal distribution of chain length on the O-antigen component of lipopolysaccharide (LPS). Gives rise to a reduced number of short chain molecules and increases in numbers of longer molecules.</text>
</comment>
<comment type="pathway">
    <text>Bacterial outer membrane biogenesis; lipopolysaccharide biosynthesis.</text>
</comment>
<comment type="subcellular location">
    <subcellularLocation>
        <location>Cell inner membrane</location>
        <topology>Multi-pass membrane protein</topology>
    </subcellularLocation>
</comment>
<comment type="similarity">
    <text evidence="2">Belongs to the WzzB/Cld/Rol family.</text>
</comment>
<comment type="sequence caution" evidence="2">
    <conflict type="erroneous initiation">
        <sequence resource="EMBL-CDS" id="AAN43629"/>
    </conflict>
</comment>
<comment type="sequence caution" evidence="2">
    <conflict type="erroneous initiation">
        <sequence resource="EMBL-CDS" id="AAP17457"/>
    </conflict>
</comment>